<proteinExistence type="evidence at transcript level"/>
<sequence>MRLLRRRHMAVRLVMVGSAFVLFLFILQRDVSGREQATEKPWLRSLVSQKDHVLDLMLGAVHNLRDSMPKFQIRAPEPQQTLASTNQSCLPGFYTPAELKPFWERPPQDPNGPGADGKAFQKKEWTPQETQEKEEGYKKHCFNAFASDRISLQRALGPDTRPPECVDQKFRRCPPLPATSVIIVFHNEAWSTLLRTVYSVLHTTPAILLKEIILVDDASTDEYLKEPLERYVKQLQVVQVVRQQERKGLITARLLGASVAQAEVLTFLDAHCECFHGWLEPLLARIAEDETVVVSPNIVTIDLNTFEFSKPVQRGRVQSRGNFDWSLTFGWEVLPAREKQRRKDETYPIKSPTFAGGLFSISKSYFEHIGTYDNQMEIWGGENVEMSFRVWQCGGQLEIIPCSVVGHVFRTKSPHTFPKGINVIARNQVRLAEVWMDGYKEIFYRRNLQAAQMAREKSFGDISERLQLRERLNCHNFSWFLDNVYPEMFVPDLKPTFFGALKNLGVDHCLDVGENNNGGKPLILYTCHGLGGNQYFEYTTQRDLRHNIAKQLCLHASAGTLGLRSCHFTGKNSQVPKDEEWEFTQDQLIRNSGSGTCLTSKDKKPVMATCNPSDPHQHWLFI</sequence>
<reference key="1">
    <citation type="journal article" date="2005" name="BMC Genomics">
        <title>Characterization of 954 bovine full-CDS cDNA sequences.</title>
        <authorList>
            <person name="Harhay G.P."/>
            <person name="Sonstegard T.S."/>
            <person name="Keele J.W."/>
            <person name="Heaton M.P."/>
            <person name="Clawson M.L."/>
            <person name="Snelling W.M."/>
            <person name="Wiedmann R.T."/>
            <person name="Van Tassell C.P."/>
            <person name="Smith T.P.L."/>
        </authorList>
    </citation>
    <scope>NUCLEOTIDE SEQUENCE [LARGE SCALE MRNA]</scope>
</reference>
<comment type="function">
    <text evidence="5">Catalyzes the initial reaction in O-linked oligosaccharide biosynthesis, the transfer of an N-acetyl-D-galactosamine residue to a serine or threonine residue on the protein receptor. May participate in synthesis of oncofetal fibronectin. Has activity toward MUC1A, MUC2, EA2 and fibronectin peptides (By similarity).</text>
</comment>
<comment type="catalytic activity">
    <reaction evidence="5">
        <text>L-seryl-[protein] + UDP-N-acetyl-alpha-D-galactosamine = a 3-O-[N-acetyl-alpha-D-galactosaminyl]-L-seryl-[protein] + UDP + H(+)</text>
        <dbReference type="Rhea" id="RHEA:23956"/>
        <dbReference type="Rhea" id="RHEA-COMP:9863"/>
        <dbReference type="Rhea" id="RHEA-COMP:12788"/>
        <dbReference type="ChEBI" id="CHEBI:15378"/>
        <dbReference type="ChEBI" id="CHEBI:29999"/>
        <dbReference type="ChEBI" id="CHEBI:53604"/>
        <dbReference type="ChEBI" id="CHEBI:58223"/>
        <dbReference type="ChEBI" id="CHEBI:67138"/>
        <dbReference type="EC" id="2.4.1.41"/>
    </reaction>
</comment>
<comment type="catalytic activity">
    <reaction evidence="5">
        <text>L-threonyl-[protein] + UDP-N-acetyl-alpha-D-galactosamine = a 3-O-[N-acetyl-alpha-D-galactosaminyl]-L-threonyl-[protein] + UDP + H(+)</text>
        <dbReference type="Rhea" id="RHEA:52424"/>
        <dbReference type="Rhea" id="RHEA-COMP:11060"/>
        <dbReference type="Rhea" id="RHEA-COMP:11689"/>
        <dbReference type="ChEBI" id="CHEBI:15378"/>
        <dbReference type="ChEBI" id="CHEBI:30013"/>
        <dbReference type="ChEBI" id="CHEBI:58223"/>
        <dbReference type="ChEBI" id="CHEBI:67138"/>
        <dbReference type="ChEBI" id="CHEBI:87075"/>
        <dbReference type="EC" id="2.4.1.41"/>
    </reaction>
</comment>
<comment type="cofactor">
    <cofactor evidence="3">
        <name>Mn(2+)</name>
        <dbReference type="ChEBI" id="CHEBI:29035"/>
    </cofactor>
</comment>
<comment type="pathway">
    <text>Protein modification; protein glycosylation.</text>
</comment>
<comment type="subcellular location">
    <subcellularLocation>
        <location evidence="3">Golgi apparatus membrane</location>
        <topology evidence="3">Single-pass type II membrane protein</topology>
    </subcellularLocation>
</comment>
<comment type="domain">
    <text evidence="2">There are two conserved domains in the glycosyltransferase region: the N-terminal domain (domain A, also called GT1 motif), which is probably involved in manganese coordination and substrate binding and the C-terminal domain (domain B, also called Gal/GalNAc-T motif), which is probably involved in catalytic reaction and UDP-Gal binding.</text>
</comment>
<comment type="domain">
    <text evidence="4">The ricin B-type lectin domain binds to GalNAc and contributes to the glycopeptide specificity.</text>
</comment>
<comment type="similarity">
    <text evidence="9">Belongs to the glycosyltransferase 2 family. GalNAc-T subfamily.</text>
</comment>
<protein>
    <recommendedName>
        <fullName>Polypeptide N-acetylgalactosaminyltransferase 6</fullName>
        <ecNumber evidence="5">2.4.1.41</ecNumber>
    </recommendedName>
    <alternativeName>
        <fullName>Polypeptide GalNAc transferase 6</fullName>
        <shortName>GalNAc-T6</shortName>
        <shortName>pp-GaNTase 6</shortName>
    </alternativeName>
    <alternativeName>
        <fullName>Protein-UDP acetylgalactosaminyltransferase 6</fullName>
    </alternativeName>
    <alternativeName>
        <fullName>UDP-GalNAc:polypeptide N-acetylgalactosaminyltransferase 6</fullName>
    </alternativeName>
</protein>
<accession>Q5EA41</accession>
<feature type="chain" id="PRO_0000059113" description="Polypeptide N-acetylgalactosaminyltransferase 6">
    <location>
        <begin position="1"/>
        <end position="622"/>
    </location>
</feature>
<feature type="topological domain" description="Cytoplasmic" evidence="6">
    <location>
        <begin position="1"/>
        <end position="8"/>
    </location>
</feature>
<feature type="transmembrane region" description="Helical; Signal-anchor for type II membrane protein" evidence="6">
    <location>
        <begin position="9"/>
        <end position="28"/>
    </location>
</feature>
<feature type="topological domain" description="Lumenal" evidence="6">
    <location>
        <begin position="29"/>
        <end position="622"/>
    </location>
</feature>
<feature type="domain" description="Ricin B-type lectin" evidence="7">
    <location>
        <begin position="507"/>
        <end position="622"/>
    </location>
</feature>
<feature type="region of interest" description="Disordered" evidence="8">
    <location>
        <begin position="103"/>
        <end position="135"/>
    </location>
</feature>
<feature type="region of interest" description="Catalytic subdomain A">
    <location>
        <begin position="176"/>
        <end position="285"/>
    </location>
</feature>
<feature type="region of interest" description="Catalytic subdomain B">
    <location>
        <begin position="348"/>
        <end position="410"/>
    </location>
</feature>
<feature type="compositionally biased region" description="Basic and acidic residues" evidence="8">
    <location>
        <begin position="119"/>
        <end position="135"/>
    </location>
</feature>
<feature type="binding site" evidence="1">
    <location>
        <position position="269"/>
    </location>
    <ligand>
        <name>Mn(2+)</name>
        <dbReference type="ChEBI" id="CHEBI:29035"/>
    </ligand>
</feature>
<feature type="binding site" evidence="1">
    <location>
        <position position="271"/>
    </location>
    <ligand>
        <name>Mn(2+)</name>
        <dbReference type="ChEBI" id="CHEBI:29035"/>
    </ligand>
</feature>
<feature type="binding site" evidence="1">
    <location>
        <position position="407"/>
    </location>
    <ligand>
        <name>Mn(2+)</name>
        <dbReference type="ChEBI" id="CHEBI:29035"/>
    </ligand>
</feature>
<feature type="binding site" evidence="1">
    <location>
        <position position="511"/>
    </location>
    <ligand>
        <name>UDP-N-acetyl-alpha-D-galactosamine</name>
        <dbReference type="ChEBI" id="CHEBI:67138"/>
    </ligand>
</feature>
<feature type="binding site" evidence="1">
    <location>
        <position position="514"/>
    </location>
    <ligand>
        <name>UDP-N-acetyl-alpha-D-galactosamine</name>
        <dbReference type="ChEBI" id="CHEBI:67138"/>
    </ligand>
</feature>
<feature type="binding site" evidence="1">
    <location>
        <position position="528"/>
    </location>
    <ligand>
        <name>UDP-N-acetyl-alpha-D-galactosamine</name>
        <dbReference type="ChEBI" id="CHEBI:67138"/>
    </ligand>
</feature>
<feature type="binding site" evidence="1">
    <location>
        <position position="533"/>
    </location>
    <ligand>
        <name>UDP-N-acetyl-alpha-D-galactosamine</name>
        <dbReference type="ChEBI" id="CHEBI:67138"/>
    </ligand>
</feature>
<feature type="glycosylation site" description="N-linked (GlcNAc...) asparagine" evidence="6">
    <location>
        <position position="86"/>
    </location>
</feature>
<feature type="glycosylation site" description="N-linked (GlcNAc...) asparagine" evidence="6">
    <location>
        <position position="476"/>
    </location>
</feature>
<feature type="disulfide bond" evidence="7">
    <location>
        <begin position="509"/>
        <end position="527"/>
    </location>
</feature>
<feature type="disulfide bond" evidence="7">
    <location>
        <begin position="553"/>
        <end position="566"/>
    </location>
</feature>
<feature type="disulfide bond" evidence="7">
    <location>
        <begin position="597"/>
        <end position="610"/>
    </location>
</feature>
<dbReference type="EC" id="2.4.1.41" evidence="5"/>
<dbReference type="EMBL" id="BT020728">
    <property type="protein sequence ID" value="AAX08745.1"/>
    <property type="molecule type" value="mRNA"/>
</dbReference>
<dbReference type="RefSeq" id="NP_001015534.1">
    <property type="nucleotide sequence ID" value="NM_001015534.1"/>
</dbReference>
<dbReference type="SMR" id="Q5EA41"/>
<dbReference type="FunCoup" id="Q5EA41">
    <property type="interactions" value="47"/>
</dbReference>
<dbReference type="STRING" id="9913.ENSBTAP00000023861"/>
<dbReference type="CAZy" id="CBM13">
    <property type="family name" value="Carbohydrate-Binding Module Family 13"/>
</dbReference>
<dbReference type="CAZy" id="GT27">
    <property type="family name" value="Glycosyltransferase Family 27"/>
</dbReference>
<dbReference type="GlyCosmos" id="Q5EA41">
    <property type="glycosylation" value="2 sites, No reported glycans"/>
</dbReference>
<dbReference type="GlyGen" id="Q5EA41">
    <property type="glycosylation" value="2 sites"/>
</dbReference>
<dbReference type="PaxDb" id="9913-ENSBTAP00000023861"/>
<dbReference type="GeneID" id="506903"/>
<dbReference type="KEGG" id="bta:506903"/>
<dbReference type="CTD" id="11226"/>
<dbReference type="eggNOG" id="KOG3736">
    <property type="taxonomic scope" value="Eukaryota"/>
</dbReference>
<dbReference type="InParanoid" id="Q5EA41"/>
<dbReference type="OrthoDB" id="416652at2759"/>
<dbReference type="UniPathway" id="UPA00378"/>
<dbReference type="Proteomes" id="UP000009136">
    <property type="component" value="Unplaced"/>
</dbReference>
<dbReference type="GO" id="GO:0005794">
    <property type="term" value="C:Golgi apparatus"/>
    <property type="evidence" value="ECO:0000318"/>
    <property type="project" value="GO_Central"/>
</dbReference>
<dbReference type="GO" id="GO:0000139">
    <property type="term" value="C:Golgi membrane"/>
    <property type="evidence" value="ECO:0007669"/>
    <property type="project" value="UniProtKB-SubCell"/>
</dbReference>
<dbReference type="GO" id="GO:0030246">
    <property type="term" value="F:carbohydrate binding"/>
    <property type="evidence" value="ECO:0007669"/>
    <property type="project" value="UniProtKB-KW"/>
</dbReference>
<dbReference type="GO" id="GO:0046872">
    <property type="term" value="F:metal ion binding"/>
    <property type="evidence" value="ECO:0007669"/>
    <property type="project" value="UniProtKB-KW"/>
</dbReference>
<dbReference type="GO" id="GO:0004653">
    <property type="term" value="F:polypeptide N-acetylgalactosaminyltransferase activity"/>
    <property type="evidence" value="ECO:0000250"/>
    <property type="project" value="UniProtKB"/>
</dbReference>
<dbReference type="GO" id="GO:0006493">
    <property type="term" value="P:protein O-linked glycosylation"/>
    <property type="evidence" value="ECO:0000318"/>
    <property type="project" value="GO_Central"/>
</dbReference>
<dbReference type="GO" id="GO:0018243">
    <property type="term" value="P:protein O-linked glycosylation via threonine"/>
    <property type="evidence" value="ECO:0000250"/>
    <property type="project" value="UniProtKB"/>
</dbReference>
<dbReference type="CDD" id="cd02510">
    <property type="entry name" value="pp-GalNAc-T"/>
    <property type="match status" value="1"/>
</dbReference>
<dbReference type="FunFam" id="2.80.10.50:FF:000024">
    <property type="entry name" value="Polypeptide N-acetylgalactosaminyltransferase"/>
    <property type="match status" value="1"/>
</dbReference>
<dbReference type="FunFam" id="3.90.550.10:FF:000039">
    <property type="entry name" value="Polypeptide N-acetylgalactosaminyltransferase"/>
    <property type="match status" value="1"/>
</dbReference>
<dbReference type="Gene3D" id="2.80.10.50">
    <property type="match status" value="1"/>
</dbReference>
<dbReference type="Gene3D" id="3.90.550.10">
    <property type="entry name" value="Spore Coat Polysaccharide Biosynthesis Protein SpsA, Chain A"/>
    <property type="match status" value="1"/>
</dbReference>
<dbReference type="InterPro" id="IPR045885">
    <property type="entry name" value="GalNAc-T"/>
</dbReference>
<dbReference type="InterPro" id="IPR001173">
    <property type="entry name" value="Glyco_trans_2-like"/>
</dbReference>
<dbReference type="InterPro" id="IPR029044">
    <property type="entry name" value="Nucleotide-diphossugar_trans"/>
</dbReference>
<dbReference type="InterPro" id="IPR035992">
    <property type="entry name" value="Ricin_B-like_lectins"/>
</dbReference>
<dbReference type="InterPro" id="IPR000772">
    <property type="entry name" value="Ricin_B_lectin"/>
</dbReference>
<dbReference type="PANTHER" id="PTHR11675">
    <property type="entry name" value="N-ACETYLGALACTOSAMINYLTRANSFERASE"/>
    <property type="match status" value="1"/>
</dbReference>
<dbReference type="PANTHER" id="PTHR11675:SF58">
    <property type="entry name" value="POLYPEPTIDE N-ACETYLGALACTOSAMINYLTRANSFERASE 6"/>
    <property type="match status" value="1"/>
</dbReference>
<dbReference type="Pfam" id="PF00535">
    <property type="entry name" value="Glycos_transf_2"/>
    <property type="match status" value="1"/>
</dbReference>
<dbReference type="Pfam" id="PF00652">
    <property type="entry name" value="Ricin_B_lectin"/>
    <property type="match status" value="1"/>
</dbReference>
<dbReference type="SMART" id="SM00458">
    <property type="entry name" value="RICIN"/>
    <property type="match status" value="1"/>
</dbReference>
<dbReference type="SUPFAM" id="SSF53448">
    <property type="entry name" value="Nucleotide-diphospho-sugar transferases"/>
    <property type="match status" value="1"/>
</dbReference>
<dbReference type="SUPFAM" id="SSF50370">
    <property type="entry name" value="Ricin B-like lectins"/>
    <property type="match status" value="1"/>
</dbReference>
<dbReference type="PROSITE" id="PS50231">
    <property type="entry name" value="RICIN_B_LECTIN"/>
    <property type="match status" value="1"/>
</dbReference>
<keyword id="KW-1015">Disulfide bond</keyword>
<keyword id="KW-0325">Glycoprotein</keyword>
<keyword id="KW-0328">Glycosyltransferase</keyword>
<keyword id="KW-0333">Golgi apparatus</keyword>
<keyword id="KW-0430">Lectin</keyword>
<keyword id="KW-0464">Manganese</keyword>
<keyword id="KW-0472">Membrane</keyword>
<keyword id="KW-0479">Metal-binding</keyword>
<keyword id="KW-1185">Reference proteome</keyword>
<keyword id="KW-0735">Signal-anchor</keyword>
<keyword id="KW-0808">Transferase</keyword>
<keyword id="KW-0812">Transmembrane</keyword>
<keyword id="KW-1133">Transmembrane helix</keyword>
<gene>
    <name type="primary">GALNT6</name>
</gene>
<name>GALT6_BOVIN</name>
<evidence type="ECO:0000250" key="1">
    <source>
        <dbReference type="UniProtKB" id="H0ZAB5"/>
    </source>
</evidence>
<evidence type="ECO:0000250" key="2">
    <source>
        <dbReference type="UniProtKB" id="O08912"/>
    </source>
</evidence>
<evidence type="ECO:0000250" key="3">
    <source>
        <dbReference type="UniProtKB" id="Q14435"/>
    </source>
</evidence>
<evidence type="ECO:0000250" key="4">
    <source>
        <dbReference type="UniProtKB" id="Q8N4A0"/>
    </source>
</evidence>
<evidence type="ECO:0000250" key="5">
    <source>
        <dbReference type="UniProtKB" id="Q8NCL4"/>
    </source>
</evidence>
<evidence type="ECO:0000255" key="6"/>
<evidence type="ECO:0000255" key="7">
    <source>
        <dbReference type="PROSITE-ProRule" id="PRU00174"/>
    </source>
</evidence>
<evidence type="ECO:0000256" key="8">
    <source>
        <dbReference type="SAM" id="MobiDB-lite"/>
    </source>
</evidence>
<evidence type="ECO:0000305" key="9"/>
<organism>
    <name type="scientific">Bos taurus</name>
    <name type="common">Bovine</name>
    <dbReference type="NCBI Taxonomy" id="9913"/>
    <lineage>
        <taxon>Eukaryota</taxon>
        <taxon>Metazoa</taxon>
        <taxon>Chordata</taxon>
        <taxon>Craniata</taxon>
        <taxon>Vertebrata</taxon>
        <taxon>Euteleostomi</taxon>
        <taxon>Mammalia</taxon>
        <taxon>Eutheria</taxon>
        <taxon>Laurasiatheria</taxon>
        <taxon>Artiodactyla</taxon>
        <taxon>Ruminantia</taxon>
        <taxon>Pecora</taxon>
        <taxon>Bovidae</taxon>
        <taxon>Bovinae</taxon>
        <taxon>Bos</taxon>
    </lineage>
</organism>